<accession>A9WPV9</accession>
<evidence type="ECO:0000255" key="1">
    <source>
        <dbReference type="HAMAP-Rule" id="MF_00003"/>
    </source>
</evidence>
<evidence type="ECO:0000256" key="2">
    <source>
        <dbReference type="SAM" id="MobiDB-lite"/>
    </source>
</evidence>
<evidence type="ECO:0000305" key="3"/>
<feature type="chain" id="PRO_0000329331" description="Ribosome-binding factor A">
    <location>
        <begin position="1"/>
        <end position="146"/>
    </location>
</feature>
<feature type="region of interest" description="Disordered" evidence="2">
    <location>
        <begin position="127"/>
        <end position="146"/>
    </location>
</feature>
<keyword id="KW-0963">Cytoplasm</keyword>
<keyword id="KW-1185">Reference proteome</keyword>
<keyword id="KW-0690">Ribosome biogenesis</keyword>
<gene>
    <name evidence="1" type="primary">rbfA</name>
    <name type="ordered locus">RSal33209_0657</name>
</gene>
<name>RBFA_RENSM</name>
<dbReference type="EMBL" id="CP000910">
    <property type="protein sequence ID" value="ABY22404.1"/>
    <property type="status" value="ALT_INIT"/>
    <property type="molecule type" value="Genomic_DNA"/>
</dbReference>
<dbReference type="RefSeq" id="WP_041684347.1">
    <property type="nucleotide sequence ID" value="NC_010168.1"/>
</dbReference>
<dbReference type="SMR" id="A9WPV9"/>
<dbReference type="STRING" id="288705.RSal33209_0657"/>
<dbReference type="KEGG" id="rsa:RSal33209_0657"/>
<dbReference type="eggNOG" id="COG0858">
    <property type="taxonomic scope" value="Bacteria"/>
</dbReference>
<dbReference type="HOGENOM" id="CLU_089475_0_0_11"/>
<dbReference type="Proteomes" id="UP000002007">
    <property type="component" value="Chromosome"/>
</dbReference>
<dbReference type="GO" id="GO:0005829">
    <property type="term" value="C:cytosol"/>
    <property type="evidence" value="ECO:0007669"/>
    <property type="project" value="TreeGrafter"/>
</dbReference>
<dbReference type="GO" id="GO:0043024">
    <property type="term" value="F:ribosomal small subunit binding"/>
    <property type="evidence" value="ECO:0007669"/>
    <property type="project" value="TreeGrafter"/>
</dbReference>
<dbReference type="GO" id="GO:0030490">
    <property type="term" value="P:maturation of SSU-rRNA"/>
    <property type="evidence" value="ECO:0007669"/>
    <property type="project" value="UniProtKB-UniRule"/>
</dbReference>
<dbReference type="Gene3D" id="3.30.300.20">
    <property type="match status" value="1"/>
</dbReference>
<dbReference type="HAMAP" id="MF_00003">
    <property type="entry name" value="RbfA"/>
    <property type="match status" value="1"/>
</dbReference>
<dbReference type="InterPro" id="IPR015946">
    <property type="entry name" value="KH_dom-like_a/b"/>
</dbReference>
<dbReference type="InterPro" id="IPR000238">
    <property type="entry name" value="RbfA"/>
</dbReference>
<dbReference type="InterPro" id="IPR023799">
    <property type="entry name" value="RbfA_dom_sf"/>
</dbReference>
<dbReference type="InterPro" id="IPR020053">
    <property type="entry name" value="Ribosome-bd_factorA_CS"/>
</dbReference>
<dbReference type="NCBIfam" id="TIGR00082">
    <property type="entry name" value="rbfA"/>
    <property type="match status" value="1"/>
</dbReference>
<dbReference type="PANTHER" id="PTHR33515">
    <property type="entry name" value="RIBOSOME-BINDING FACTOR A, CHLOROPLASTIC-RELATED"/>
    <property type="match status" value="1"/>
</dbReference>
<dbReference type="PANTHER" id="PTHR33515:SF1">
    <property type="entry name" value="RIBOSOME-BINDING FACTOR A, CHLOROPLASTIC-RELATED"/>
    <property type="match status" value="1"/>
</dbReference>
<dbReference type="Pfam" id="PF02033">
    <property type="entry name" value="RBFA"/>
    <property type="match status" value="1"/>
</dbReference>
<dbReference type="SUPFAM" id="SSF89919">
    <property type="entry name" value="Ribosome-binding factor A, RbfA"/>
    <property type="match status" value="1"/>
</dbReference>
<dbReference type="PROSITE" id="PS01319">
    <property type="entry name" value="RBFA"/>
    <property type="match status" value="1"/>
</dbReference>
<reference key="1">
    <citation type="journal article" date="2008" name="J. Bacteriol.">
        <title>Genome sequence of the fish pathogen Renibacterium salmoninarum suggests reductive evolution away from an environmental Arthrobacter ancestor.</title>
        <authorList>
            <person name="Wiens G.D."/>
            <person name="Rockey D.D."/>
            <person name="Wu Z."/>
            <person name="Chang J."/>
            <person name="Levy R."/>
            <person name="Crane S."/>
            <person name="Chen D.S."/>
            <person name="Capri G.R."/>
            <person name="Burnett J.R."/>
            <person name="Sudheesh P.S."/>
            <person name="Schipma M.J."/>
            <person name="Burd H."/>
            <person name="Bhattacharyya A."/>
            <person name="Rhodes L.D."/>
            <person name="Kaul R."/>
            <person name="Strom M.S."/>
        </authorList>
    </citation>
    <scope>NUCLEOTIDE SEQUENCE [LARGE SCALE GENOMIC DNA]</scope>
    <source>
        <strain>ATCC 33209 / DSM 20767 / JCM 11484 / NBRC 15589 / NCIMB 2235</strain>
    </source>
</reference>
<organism>
    <name type="scientific">Renibacterium salmoninarum (strain ATCC 33209 / DSM 20767 / JCM 11484 / NBRC 15589 / NCIMB 2235)</name>
    <dbReference type="NCBI Taxonomy" id="288705"/>
    <lineage>
        <taxon>Bacteria</taxon>
        <taxon>Bacillati</taxon>
        <taxon>Actinomycetota</taxon>
        <taxon>Actinomycetes</taxon>
        <taxon>Micrococcales</taxon>
        <taxon>Micrococcaceae</taxon>
        <taxon>Renibacterium</taxon>
    </lineage>
</organism>
<proteinExistence type="inferred from homology"/>
<sequence length="146" mass="16172">MADPARAARLAQRIKVIVAEALRKQVKQPGVENITITETRVTNDLQHATIYYTIFGGTEARQEAEDSLAKSKGILRREVGKNLTIRLTPTLEFISDEVPETASHVEELIRLAKERDAELAARAARAEFAGEADPYKKPEDDEAAES</sequence>
<comment type="function">
    <text evidence="1">One of several proteins that assist in the late maturation steps of the functional core of the 30S ribosomal subunit. Associates with free 30S ribosomal subunits (but not with 30S subunits that are part of 70S ribosomes or polysomes). Required for efficient processing of 16S rRNA. May interact with the 5'-terminal helix region of 16S rRNA.</text>
</comment>
<comment type="subunit">
    <text evidence="1">Monomer. Binds 30S ribosomal subunits, but not 50S ribosomal subunits or 70S ribosomes.</text>
</comment>
<comment type="subcellular location">
    <subcellularLocation>
        <location evidence="1">Cytoplasm</location>
    </subcellularLocation>
</comment>
<comment type="similarity">
    <text evidence="1">Belongs to the RbfA family.</text>
</comment>
<comment type="sequence caution" evidence="3">
    <conflict type="erroneous initiation">
        <sequence resource="EMBL-CDS" id="ABY22404"/>
    </conflict>
    <text>Extended N-terminus.</text>
</comment>
<protein>
    <recommendedName>
        <fullName evidence="1">Ribosome-binding factor A</fullName>
    </recommendedName>
</protein>